<proteinExistence type="inferred from homology"/>
<feature type="chain" id="PRO_0000373564" description="Protein I177L">
    <location>
        <begin position="1"/>
        <end position="66"/>
    </location>
</feature>
<comment type="subcellular location">
    <subcellularLocation>
        <location evidence="1">Virion</location>
    </subcellularLocation>
</comment>
<comment type="induction">
    <text evidence="2">Expressed in the late phase of the viral replicative cycle.</text>
</comment>
<comment type="similarity">
    <text evidence="2">Belongs to the asfivirus I177L family.</text>
</comment>
<accession>P0CA81</accession>
<keyword id="KW-0426">Late protein</keyword>
<keyword id="KW-0946">Virion</keyword>
<gene>
    <name type="ordered locus">Mal-152</name>
</gene>
<evidence type="ECO:0000250" key="1">
    <source>
        <dbReference type="UniProtKB" id="P27942"/>
    </source>
</evidence>
<evidence type="ECO:0000305" key="2"/>
<organism>
    <name type="scientific">African swine fever virus (isolate Tick/Malawi/Lil 20-1/1983)</name>
    <name type="common">ASFV</name>
    <dbReference type="NCBI Taxonomy" id="10500"/>
    <lineage>
        <taxon>Viruses</taxon>
        <taxon>Varidnaviria</taxon>
        <taxon>Bamfordvirae</taxon>
        <taxon>Nucleocytoviricota</taxon>
        <taxon>Pokkesviricetes</taxon>
        <taxon>Asfuvirales</taxon>
        <taxon>Asfarviridae</taxon>
        <taxon>Asfivirus</taxon>
        <taxon>African swine fever virus</taxon>
    </lineage>
</organism>
<sequence>MWKVDDQGFLIISVTGTKFNLIATSSKIGFYTDPPSQLFLMPLNFFPPPKFSKNEPHKKQKRFIYF</sequence>
<dbReference type="EMBL" id="AY261361">
    <property type="status" value="NOT_ANNOTATED_CDS"/>
    <property type="molecule type" value="Genomic_DNA"/>
</dbReference>
<dbReference type="Proteomes" id="UP000000860">
    <property type="component" value="Segment"/>
</dbReference>
<dbReference type="GO" id="GO:0044423">
    <property type="term" value="C:virion component"/>
    <property type="evidence" value="ECO:0007669"/>
    <property type="project" value="UniProtKB-KW"/>
</dbReference>
<name>VF177_ASFM2</name>
<protein>
    <recommendedName>
        <fullName>Protein I177L</fullName>
    </recommendedName>
</protein>
<organismHost>
    <name type="scientific">Ornithodoros</name>
    <name type="common">relapsing fever ticks</name>
    <dbReference type="NCBI Taxonomy" id="6937"/>
</organismHost>
<organismHost>
    <name type="scientific">Phacochoerus aethiopicus</name>
    <name type="common">Warthog</name>
    <dbReference type="NCBI Taxonomy" id="85517"/>
</organismHost>
<organismHost>
    <name type="scientific">Phacochoerus africanus</name>
    <name type="common">Warthog</name>
    <dbReference type="NCBI Taxonomy" id="41426"/>
</organismHost>
<organismHost>
    <name type="scientific">Potamochoerus larvatus</name>
    <name type="common">Bushpig</name>
    <dbReference type="NCBI Taxonomy" id="273792"/>
</organismHost>
<organismHost>
    <name type="scientific">Sus scrofa</name>
    <name type="common">Pig</name>
    <dbReference type="NCBI Taxonomy" id="9823"/>
</organismHost>
<reference key="1">
    <citation type="submission" date="2003-03" db="EMBL/GenBank/DDBJ databases">
        <title>African swine fever virus genomes.</title>
        <authorList>
            <person name="Kutish G.F."/>
            <person name="Rock D.L."/>
        </authorList>
    </citation>
    <scope>NUCLEOTIDE SEQUENCE [LARGE SCALE GENOMIC DNA]</scope>
</reference>